<comment type="function">
    <text evidence="3">Component of the cytochrome c oxidase, the last enzyme in the mitochondrial electron transport chain which drives oxidative phosphorylation. The respiratory chain contains 3 multisubunit complexes succinate dehydrogenase (complex II, CII), ubiquinol-cytochrome c oxidoreductase (cytochrome b-c1 complex, complex III, CIII) and cytochrome c oxidase (complex IV, CIV), that cooperate to transfer electrons derived from NADH and succinate to molecular oxygen, creating an electrochemical gradient over the inner membrane that drives transmembrane transport and the ATP synthase. Cytochrome c oxidase is the component of the respiratory chain that catalyzes the reduction of oxygen to water. Electrons originating from reduced cytochrome c in the intermembrane space (IMS) are transferred via the dinuclear copper A center (CU(A)) of subunit 2 and heme A of subunit 1 to the active site in subunit 1, a binuclear center (BNC) formed by heme A3 and copper B (CU(B)). The BNC reduces molecular oxygen to 2 water molecules using 4 electrons from cytochrome c in the IMS and 4 protons from the mitochondrial matrix.</text>
</comment>
<comment type="catalytic activity">
    <reaction evidence="3">
        <text>4 Fe(II)-[cytochrome c] + O2 + 8 H(+)(in) = 4 Fe(III)-[cytochrome c] + 2 H2O + 4 H(+)(out)</text>
        <dbReference type="Rhea" id="RHEA:11436"/>
        <dbReference type="Rhea" id="RHEA-COMP:10350"/>
        <dbReference type="Rhea" id="RHEA-COMP:14399"/>
        <dbReference type="ChEBI" id="CHEBI:15377"/>
        <dbReference type="ChEBI" id="CHEBI:15378"/>
        <dbReference type="ChEBI" id="CHEBI:15379"/>
        <dbReference type="ChEBI" id="CHEBI:29033"/>
        <dbReference type="ChEBI" id="CHEBI:29034"/>
        <dbReference type="EC" id="7.1.1.9"/>
    </reaction>
    <physiologicalReaction direction="left-to-right" evidence="3">
        <dbReference type="Rhea" id="RHEA:11437"/>
    </physiologicalReaction>
</comment>
<comment type="cofactor">
    <cofactor evidence="3">
        <name>heme</name>
        <dbReference type="ChEBI" id="CHEBI:30413"/>
    </cofactor>
    <text evidence="3">Binds 2 heme A groups non-covalently per subunit.</text>
</comment>
<comment type="cofactor">
    <cofactor evidence="3">
        <name>Cu cation</name>
        <dbReference type="ChEBI" id="CHEBI:23378"/>
    </cofactor>
    <text evidence="3">Binds a copper B center.</text>
</comment>
<comment type="pathway">
    <text evidence="3">Energy metabolism; oxidative phosphorylation.</text>
</comment>
<comment type="subunit">
    <text evidence="3">Component of the cytochrome c oxidase (complex IV, CIV), a multisubunit enzyme composed of a catalytic core of 3 subunits and several supernumerary subunits. The complex exists as a monomer or a dimer and forms supercomplexes (SCs) in the inner mitochondrial membrane with ubiquinol-cytochrome c oxidoreductase (cytochrome b-c1 complex, complex III, CIII).</text>
</comment>
<comment type="subcellular location">
    <subcellularLocation>
        <location evidence="3">Mitochondrion inner membrane</location>
        <topology evidence="3">Multi-pass membrane protein</topology>
    </subcellularLocation>
</comment>
<comment type="similarity">
    <text evidence="5">In the N-terminal section; belongs to the heme-copper respiratory oxidase family.</text>
</comment>
<comment type="similarity">
    <text evidence="5">In the C-terminal section; belongs to the cytochrome c oxidase subunit 2 family.</text>
</comment>
<protein>
    <recommendedName>
        <fullName>Cytochrome c oxidase subunit 1+2</fullName>
        <ecNumber>7.1.1.9</ecNumber>
    </recommendedName>
    <alternativeName>
        <fullName>Cytochrome c oxidase polypeptide I+II</fullName>
    </alternativeName>
</protein>
<gene>
    <name type="primary">cox1/2</name>
    <name type="synonym">cox1</name>
    <name type="synonym">coxI</name>
    <name type="synonym">Ddmco</name>
    <name type="ORF">DDB_G0294088</name>
</gene>
<name>COX1_DICDI</name>
<geneLocation type="mitochondrion"/>
<sequence length="764" mass="85501">MKILEIYDKQIAEKEGNIFIFISKWIISVDHKNIGTMYTNFSILAGIVGTLLSLVIRMELSTGNMLDGDGQQYNVIVTAHGLIMIFFVVMPAMLGGFANWFIPIMVGSPDVAFPRLNNISLWLIIVSFFLLLTSSCVGIGVGTGWTVYPPLSTMEYHPGHAVDVGILSLHIAGASSLLGAINFLTTVFNMKIAGLSWSKVSLFVWSILITAVLLVLSLPVLAGGLTMLITDRNFETTFFDPIGGGDPILYQHLFWFFGHPEVYILILPGFGLVSIILSKYSNKGIFGVKGMISAMSAIGFLGFLVWAHHMYTVGLDVDTRAYFTAATMIIAIPTGIKIFSWLATLWGGVIKITTPMLFVIGFLVLFTIGGLTGVVLANGGLDISLHDTYYVVAHFHYVLSMGAIFAIFAGYYYYYSIMNSTRLFGVVRYNEQLGRIHFWTMFIGVNVTFFPMHFLGLAGMPRRIGDYPDAYIGWNLIASYGSLITAFGLLFFVVNIFTPYIRRSVNIKNGAIILMGLDFARDWQIGFQDPATPIMEGIIDLHNYIFFYLIVVAVFIGWVMGRILWRFSYKWSYPTIGDIEIFKNFTAYNQIIHGTVIEIVWTLIPTVILYLIAIPSFTLLYAMDEIINPTVTIKIIGHQWYWSYEYGDNASNLIEFDSYMVYERDLAEGQLRLLEVDNAMVVPVKTHIRLIITSGDVLHSWAIPSFGIKVDAVPGRLNQIGLYVKREGTFYGQCSELCGVDHGFMPIKVQAVKLGEYFSKLNEK</sequence>
<reference key="1">
    <citation type="journal article" date="1997" name="Curr. Genet.">
        <title>Group-I introns in the cytochrome c oxidase genes of Dictyostelium discoideum: two related ORFs in one loop of a group-I intron, a cox1/2 hybrid gene and an unusually large cox3 gene.</title>
        <authorList>
            <person name="Ogawa S."/>
            <person name="Matsuo K."/>
            <person name="Angata K."/>
            <person name="Yanagisawa K."/>
            <person name="Tanaka Y."/>
        </authorList>
    </citation>
    <scope>NUCLEOTIDE SEQUENCE [GENOMIC DNA]</scope>
    <source>
        <strain>AX3</strain>
    </source>
</reference>
<reference key="2">
    <citation type="journal article" date="2000" name="Mol. Gen. Genet.">
        <title>The mitochondrial DNA of Dictyostelium discoideum: complete sequence, gene content and genome organization.</title>
        <authorList>
            <person name="Ogawa S."/>
            <person name="Yoshino R."/>
            <person name="Angata K."/>
            <person name="Iwamoto M."/>
            <person name="Pi M."/>
            <person name="Kuroe K."/>
            <person name="Matsuo K."/>
            <person name="Morio T."/>
            <person name="Urushihara H."/>
            <person name="Yanagisawa K."/>
            <person name="Tanaka Y."/>
        </authorList>
    </citation>
    <scope>NUCLEOTIDE SEQUENCE [LARGE SCALE GENOMIC DNA]</scope>
    <source>
        <strain>AX3</strain>
    </source>
</reference>
<reference key="3">
    <citation type="submission" date="1997-01" db="EMBL/GenBank/DDBJ databases">
        <title>Dictyostelium discoideum Ddmco gene sequence.</title>
        <authorList>
            <person name="Mueller-Taubenberger A."/>
        </authorList>
    </citation>
    <scope>NUCLEOTIDE SEQUENCE [MRNA] OF 83-205</scope>
    <source>
        <strain>AX3</strain>
    </source>
</reference>
<reference key="4">
    <citation type="journal article" date="1997" name="Biochim. Biophys. Acta">
        <title>Subunits I and II of Dictyostelium cytochrome c oxidase are specified by a single open reading frame transcribed into a large polycistronic RNA.</title>
        <authorList>
            <person name="Pellizzari R."/>
            <person name="Anjard C."/>
            <person name="Bisson R."/>
        </authorList>
    </citation>
    <scope>NUCLEOTIDE SEQUENCE [GENOMIC DNA] OF 259-764</scope>
    <source>
        <strain>AX3</strain>
    </source>
</reference>
<reference key="5">
    <citation type="submission" date="1996-02" db="EMBL/GenBank/DDBJ databases">
        <authorList>
            <person name="Anjard C."/>
            <person name="Reymond C.D."/>
        </authorList>
    </citation>
    <scope>NUCLEOTIDE SEQUENCE [GENOMIC DNA] OF 259-341</scope>
    <source>
        <strain>AX2</strain>
    </source>
</reference>
<dbReference type="EC" id="7.1.1.9"/>
<dbReference type="EMBL" id="D50297">
    <property type="protein sequence ID" value="BAA21123.1"/>
    <property type="molecule type" value="Genomic_DNA"/>
</dbReference>
<dbReference type="EMBL" id="AB000109">
    <property type="protein sequence ID" value="BAA78055.1"/>
    <property type="molecule type" value="Genomic_DNA"/>
</dbReference>
<dbReference type="EMBL" id="U87391">
    <property type="protein sequence ID" value="AAB42021.1"/>
    <property type="molecule type" value="mRNA"/>
</dbReference>
<dbReference type="EMBL" id="X81884">
    <property type="protein sequence ID" value="CAA57467.1"/>
    <property type="molecule type" value="Genomic_DNA"/>
</dbReference>
<dbReference type="EMBL" id="X95896">
    <property type="protein sequence ID" value="CAA65139.1"/>
    <property type="molecule type" value="Genomic_DNA"/>
</dbReference>
<dbReference type="PIR" id="T43751">
    <property type="entry name" value="T43751"/>
</dbReference>
<dbReference type="RefSeq" id="NP_050073.1">
    <property type="nucleotide sequence ID" value="NC_000895.1"/>
</dbReference>
<dbReference type="SMR" id="O21042"/>
<dbReference type="FunCoup" id="O21042">
    <property type="interactions" value="18"/>
</dbReference>
<dbReference type="STRING" id="44689.O21042"/>
<dbReference type="GeneID" id="2193894"/>
<dbReference type="KEGG" id="ddi:DidioMp06"/>
<dbReference type="dictyBase" id="DDB_G0294088">
    <property type="gene designation" value="cox1/2"/>
</dbReference>
<dbReference type="VEuPathDB" id="AmoebaDB:DidioMp06"/>
<dbReference type="InParanoid" id="O21042"/>
<dbReference type="PhylomeDB" id="O21042"/>
<dbReference type="Reactome" id="R-DDI-9837999">
    <property type="pathway name" value="Mitochondrial protein degradation"/>
</dbReference>
<dbReference type="UniPathway" id="UPA00705"/>
<dbReference type="PRO" id="PR:O21042"/>
<dbReference type="Proteomes" id="UP000002195">
    <property type="component" value="Mitochondrion"/>
</dbReference>
<dbReference type="GO" id="GO:0005743">
    <property type="term" value="C:mitochondrial inner membrane"/>
    <property type="evidence" value="ECO:0007669"/>
    <property type="project" value="UniProtKB-SubCell"/>
</dbReference>
<dbReference type="GO" id="GO:0045277">
    <property type="term" value="C:respiratory chain complex IV"/>
    <property type="evidence" value="ECO:0000318"/>
    <property type="project" value="GO_Central"/>
</dbReference>
<dbReference type="GO" id="GO:0005507">
    <property type="term" value="F:copper ion binding"/>
    <property type="evidence" value="ECO:0007669"/>
    <property type="project" value="InterPro"/>
</dbReference>
<dbReference type="GO" id="GO:0004129">
    <property type="term" value="F:cytochrome-c oxidase activity"/>
    <property type="evidence" value="ECO:0007669"/>
    <property type="project" value="UniProtKB-EC"/>
</dbReference>
<dbReference type="GO" id="GO:0020037">
    <property type="term" value="F:heme binding"/>
    <property type="evidence" value="ECO:0007669"/>
    <property type="project" value="InterPro"/>
</dbReference>
<dbReference type="GO" id="GO:0009060">
    <property type="term" value="P:aerobic respiration"/>
    <property type="evidence" value="ECO:0000318"/>
    <property type="project" value="GO_Central"/>
</dbReference>
<dbReference type="GO" id="GO:0006119">
    <property type="term" value="P:oxidative phosphorylation"/>
    <property type="evidence" value="ECO:0007669"/>
    <property type="project" value="UniProtKB-UniPathway"/>
</dbReference>
<dbReference type="GO" id="GO:0022904">
    <property type="term" value="P:respiratory electron transport chain"/>
    <property type="evidence" value="ECO:0000318"/>
    <property type="project" value="GO_Central"/>
</dbReference>
<dbReference type="CDD" id="cd13912">
    <property type="entry name" value="CcO_II_C"/>
    <property type="match status" value="1"/>
</dbReference>
<dbReference type="CDD" id="cd01663">
    <property type="entry name" value="Cyt_c_Oxidase_I"/>
    <property type="match status" value="1"/>
</dbReference>
<dbReference type="FunFam" id="1.10.287.90:FF:000004">
    <property type="entry name" value="Cytochrome c oxidase subunit 2"/>
    <property type="match status" value="1"/>
</dbReference>
<dbReference type="FunFam" id="2.60.40.420:FF:000001">
    <property type="entry name" value="Cytochrome c oxidase subunit 2"/>
    <property type="match status" value="1"/>
</dbReference>
<dbReference type="Gene3D" id="1.10.287.90">
    <property type="match status" value="1"/>
</dbReference>
<dbReference type="Gene3D" id="2.60.40.420">
    <property type="entry name" value="Cupredoxins - blue copper proteins"/>
    <property type="match status" value="1"/>
</dbReference>
<dbReference type="Gene3D" id="1.20.210.10">
    <property type="entry name" value="Cytochrome c oxidase-like, subunit I domain"/>
    <property type="match status" value="1"/>
</dbReference>
<dbReference type="InterPro" id="IPR002429">
    <property type="entry name" value="CcO_II-like_C"/>
</dbReference>
<dbReference type="InterPro" id="IPR034210">
    <property type="entry name" value="CcO_II_C"/>
</dbReference>
<dbReference type="InterPro" id="IPR001505">
    <property type="entry name" value="Copper_CuA"/>
</dbReference>
<dbReference type="InterPro" id="IPR008972">
    <property type="entry name" value="Cupredoxin"/>
</dbReference>
<dbReference type="InterPro" id="IPR023616">
    <property type="entry name" value="Cyt_c_oxase-like_su1_dom"/>
</dbReference>
<dbReference type="InterPro" id="IPR036927">
    <property type="entry name" value="Cyt_c_oxase-like_su1_sf"/>
</dbReference>
<dbReference type="InterPro" id="IPR000883">
    <property type="entry name" value="Cyt_C_Oxase_1"/>
</dbReference>
<dbReference type="InterPro" id="IPR023615">
    <property type="entry name" value="Cyt_c_Oxase_su1_BS"/>
</dbReference>
<dbReference type="InterPro" id="IPR033944">
    <property type="entry name" value="Cyt_c_oxase_su1_dom"/>
</dbReference>
<dbReference type="InterPro" id="IPR014222">
    <property type="entry name" value="Cyt_c_oxidase_su2"/>
</dbReference>
<dbReference type="InterPro" id="IPR011759">
    <property type="entry name" value="Cyt_c_oxidase_su2_TM_dom"/>
</dbReference>
<dbReference type="InterPro" id="IPR036257">
    <property type="entry name" value="Cyt_c_oxidase_su2_TM_sf"/>
</dbReference>
<dbReference type="NCBIfam" id="TIGR02866">
    <property type="entry name" value="CoxB"/>
    <property type="match status" value="1"/>
</dbReference>
<dbReference type="PANTHER" id="PTHR10422">
    <property type="entry name" value="CYTOCHROME C OXIDASE SUBUNIT 1"/>
    <property type="match status" value="1"/>
</dbReference>
<dbReference type="PANTHER" id="PTHR10422:SF18">
    <property type="entry name" value="CYTOCHROME C OXIDASE SUBUNIT 1"/>
    <property type="match status" value="1"/>
</dbReference>
<dbReference type="Pfam" id="PF00115">
    <property type="entry name" value="COX1"/>
    <property type="match status" value="1"/>
</dbReference>
<dbReference type="Pfam" id="PF00116">
    <property type="entry name" value="COX2"/>
    <property type="match status" value="1"/>
</dbReference>
<dbReference type="Pfam" id="PF02790">
    <property type="entry name" value="COX2_TM"/>
    <property type="match status" value="1"/>
</dbReference>
<dbReference type="PRINTS" id="PR01165">
    <property type="entry name" value="CYCOXIDASEI"/>
</dbReference>
<dbReference type="SUPFAM" id="SSF49503">
    <property type="entry name" value="Cupredoxins"/>
    <property type="match status" value="1"/>
</dbReference>
<dbReference type="SUPFAM" id="SSF81442">
    <property type="entry name" value="Cytochrome c oxidase subunit I-like"/>
    <property type="match status" value="1"/>
</dbReference>
<dbReference type="SUPFAM" id="SSF81464">
    <property type="entry name" value="Cytochrome c oxidase subunit II-like, transmembrane region"/>
    <property type="match status" value="1"/>
</dbReference>
<dbReference type="PROSITE" id="PS50855">
    <property type="entry name" value="COX1"/>
    <property type="match status" value="1"/>
</dbReference>
<dbReference type="PROSITE" id="PS00077">
    <property type="entry name" value="COX1_CUB"/>
    <property type="match status" value="1"/>
</dbReference>
<dbReference type="PROSITE" id="PS00078">
    <property type="entry name" value="COX2"/>
    <property type="match status" value="1"/>
</dbReference>
<dbReference type="PROSITE" id="PS50857">
    <property type="entry name" value="COX2_CUA"/>
    <property type="match status" value="1"/>
</dbReference>
<dbReference type="PROSITE" id="PS50999">
    <property type="entry name" value="COX2_TM"/>
    <property type="match status" value="1"/>
</dbReference>
<accession>O21042</accession>
<accession>P92625</accession>
<accession>Q23893</accession>
<accession>Q7GET3</accession>
<feature type="chain" id="PRO_0000312383" description="Cytochrome c oxidase subunit 1+2">
    <location>
        <begin position="1"/>
        <end position="764"/>
    </location>
</feature>
<feature type="transmembrane region" description="Helical" evidence="4">
    <location>
        <begin position="36"/>
        <end position="56"/>
    </location>
</feature>
<feature type="transmembrane region" description="Helical" evidence="4">
    <location>
        <begin position="82"/>
        <end position="102"/>
    </location>
</feature>
<feature type="transmembrane region" description="Helical" evidence="4">
    <location>
        <begin position="121"/>
        <end position="141"/>
    </location>
</feature>
<feature type="transmembrane region" description="Helical" evidence="4">
    <location>
        <begin position="164"/>
        <end position="184"/>
    </location>
</feature>
<feature type="transmembrane region" description="Helical" evidence="4">
    <location>
        <begin position="202"/>
        <end position="222"/>
    </location>
</feature>
<feature type="transmembrane region" description="Helical" evidence="4">
    <location>
        <begin position="253"/>
        <end position="273"/>
    </location>
</feature>
<feature type="transmembrane region" description="Helical" evidence="4">
    <location>
        <begin position="285"/>
        <end position="305"/>
    </location>
</feature>
<feature type="transmembrane region" description="Helical" evidence="4">
    <location>
        <begin position="329"/>
        <end position="349"/>
    </location>
</feature>
<feature type="transmembrane region" description="Helical" evidence="4">
    <location>
        <begin position="356"/>
        <end position="376"/>
    </location>
</feature>
<feature type="transmembrane region" description="Helical" evidence="4">
    <location>
        <begin position="390"/>
        <end position="410"/>
    </location>
</feature>
<feature type="transmembrane region" description="Helical" evidence="4">
    <location>
        <begin position="438"/>
        <end position="458"/>
    </location>
</feature>
<feature type="transmembrane region" description="Helical" evidence="4">
    <location>
        <begin position="477"/>
        <end position="497"/>
    </location>
</feature>
<feature type="transmembrane region" description="Helical" evidence="4">
    <location>
        <begin position="545"/>
        <end position="565"/>
    </location>
</feature>
<feature type="transmembrane region" description="Helical" evidence="4">
    <location>
        <begin position="594"/>
        <end position="614"/>
    </location>
</feature>
<feature type="region of interest" description="COX1">
    <location>
        <begin position="1"/>
        <end position="485"/>
    </location>
</feature>
<feature type="region of interest" description="COX2">
    <location>
        <begin position="486"/>
        <end position="764"/>
    </location>
</feature>
<feature type="binding site" evidence="3">
    <location>
        <position position="59"/>
    </location>
    <ligand>
        <name>Ca(2+)</name>
        <dbReference type="ChEBI" id="CHEBI:29108"/>
    </ligand>
</feature>
<feature type="binding site" description="axial binding residue" evidence="3">
    <location>
        <position position="80"/>
    </location>
    <ligand>
        <name>Fe(II)-heme a</name>
        <dbReference type="ChEBI" id="CHEBI:61715"/>
        <note>low-spin</note>
    </ligand>
    <ligandPart>
        <name>Fe</name>
        <dbReference type="ChEBI" id="CHEBI:18248"/>
    </ligandPart>
</feature>
<feature type="binding site" evidence="3">
    <location>
        <position position="259"/>
    </location>
    <ligand>
        <name>Cu cation</name>
        <dbReference type="ChEBI" id="CHEBI:23378"/>
        <label>B</label>
    </ligand>
</feature>
<feature type="binding site" evidence="2">
    <location>
        <position position="263"/>
    </location>
    <ligand>
        <name>O2</name>
        <dbReference type="ChEBI" id="CHEBI:15379"/>
    </ligand>
</feature>
<feature type="binding site" evidence="3">
    <location>
        <position position="308"/>
    </location>
    <ligand>
        <name>Cu cation</name>
        <dbReference type="ChEBI" id="CHEBI:23378"/>
        <label>B</label>
    </ligand>
</feature>
<feature type="binding site" evidence="3">
    <location>
        <position position="309"/>
    </location>
    <ligand>
        <name>Cu cation</name>
        <dbReference type="ChEBI" id="CHEBI:23378"/>
        <label>B</label>
    </ligand>
</feature>
<feature type="binding site" evidence="3">
    <location>
        <position position="386"/>
    </location>
    <ligand>
        <name>Mg(2+)</name>
        <dbReference type="ChEBI" id="CHEBI:18420"/>
        <note>ligand shared with subunit 2</note>
    </ligand>
</feature>
<feature type="binding site" evidence="3">
    <location>
        <position position="387"/>
    </location>
    <ligand>
        <name>Mg(2+)</name>
        <dbReference type="ChEBI" id="CHEBI:18420"/>
        <note>ligand shared with subunit 2</note>
    </ligand>
</feature>
<feature type="binding site" description="axial binding residue" evidence="3">
    <location>
        <position position="394"/>
    </location>
    <ligand>
        <name>heme a3</name>
        <dbReference type="ChEBI" id="CHEBI:83282"/>
        <note>high-spin</note>
    </ligand>
    <ligandPart>
        <name>Fe</name>
        <dbReference type="ChEBI" id="CHEBI:18248"/>
    </ligandPart>
</feature>
<feature type="binding site" description="axial binding residue" evidence="3">
    <location>
        <position position="396"/>
    </location>
    <ligand>
        <name>Fe(II)-heme a</name>
        <dbReference type="ChEBI" id="CHEBI:61715"/>
        <note>low-spin</note>
    </ligand>
    <ligandPart>
        <name>Fe</name>
        <dbReference type="ChEBI" id="CHEBI:18248"/>
    </ligandPart>
</feature>
<feature type="binding site" evidence="1">
    <location>
        <position position="699"/>
    </location>
    <ligand>
        <name>Cu cation</name>
        <dbReference type="ChEBI" id="CHEBI:23378"/>
        <label>A</label>
    </ligand>
</feature>
<feature type="binding site" evidence="1">
    <location>
        <position position="734"/>
    </location>
    <ligand>
        <name>Cu cation</name>
        <dbReference type="ChEBI" id="CHEBI:23378"/>
        <label>A</label>
    </ligand>
</feature>
<feature type="binding site" evidence="1">
    <location>
        <position position="738"/>
    </location>
    <ligand>
        <name>Cu cation</name>
        <dbReference type="ChEBI" id="CHEBI:23378"/>
        <label>A</label>
    </ligand>
</feature>
<feature type="binding site" evidence="1">
    <location>
        <position position="742"/>
    </location>
    <ligand>
        <name>Cu cation</name>
        <dbReference type="ChEBI" id="CHEBI:23378"/>
        <label>A</label>
    </ligand>
</feature>
<feature type="cross-link" description="1'-histidyl-3'-tyrosine (His-Tyr)" evidence="3">
    <location>
        <begin position="259"/>
        <end position="263"/>
    </location>
</feature>
<feature type="sequence conflict" description="In Ref. 3; AAB42021." evidence="5" ref="3">
    <original>IMIFFVV</original>
    <variation>MKVFMNC</variation>
    <location>
        <begin position="83"/>
        <end position="89"/>
    </location>
</feature>
<feature type="sequence conflict" description="In Ref. 3; AAB42021." evidence="5" ref="3">
    <original>I</original>
    <variation>II</variation>
    <location>
        <position position="104"/>
    </location>
</feature>
<feature type="sequence conflict" description="In Ref. 3; AAB42021." evidence="5" ref="3">
    <original>S</original>
    <variation>P</variation>
    <location>
        <position position="198"/>
    </location>
</feature>
<feature type="sequence conflict" description="In Ref. 5; CAA65139." evidence="5" ref="5">
    <original>H</original>
    <variation>D</variation>
    <location>
        <position position="259"/>
    </location>
</feature>
<proteinExistence type="evidence at transcript level"/>
<keyword id="KW-0106">Calcium</keyword>
<keyword id="KW-0186">Copper</keyword>
<keyword id="KW-0249">Electron transport</keyword>
<keyword id="KW-0349">Heme</keyword>
<keyword id="KW-0408">Iron</keyword>
<keyword id="KW-0460">Magnesium</keyword>
<keyword id="KW-0472">Membrane</keyword>
<keyword id="KW-0479">Metal-binding</keyword>
<keyword id="KW-0496">Mitochondrion</keyword>
<keyword id="KW-0999">Mitochondrion inner membrane</keyword>
<keyword id="KW-1185">Reference proteome</keyword>
<keyword id="KW-0679">Respiratory chain</keyword>
<keyword id="KW-1278">Translocase</keyword>
<keyword id="KW-0812">Transmembrane</keyword>
<keyword id="KW-1133">Transmembrane helix</keyword>
<keyword id="KW-0813">Transport</keyword>
<organism>
    <name type="scientific">Dictyostelium discoideum</name>
    <name type="common">Social amoeba</name>
    <dbReference type="NCBI Taxonomy" id="44689"/>
    <lineage>
        <taxon>Eukaryota</taxon>
        <taxon>Amoebozoa</taxon>
        <taxon>Evosea</taxon>
        <taxon>Eumycetozoa</taxon>
        <taxon>Dictyostelia</taxon>
        <taxon>Dictyosteliales</taxon>
        <taxon>Dictyosteliaceae</taxon>
        <taxon>Dictyostelium</taxon>
    </lineage>
</organism>
<evidence type="ECO:0000250" key="1"/>
<evidence type="ECO:0000250" key="2">
    <source>
        <dbReference type="UniProtKB" id="P00396"/>
    </source>
</evidence>
<evidence type="ECO:0000250" key="3">
    <source>
        <dbReference type="UniProtKB" id="P00401"/>
    </source>
</evidence>
<evidence type="ECO:0000255" key="4"/>
<evidence type="ECO:0000305" key="5"/>